<organism>
    <name type="scientific">Galago matschiei</name>
    <name type="common">Dusky bushbaby</name>
    <name type="synonym">Galago inustus</name>
    <dbReference type="NCBI Taxonomy" id="135486"/>
    <lineage>
        <taxon>Eukaryota</taxon>
        <taxon>Metazoa</taxon>
        <taxon>Chordata</taxon>
        <taxon>Craniata</taxon>
        <taxon>Vertebrata</taxon>
        <taxon>Euteleostomi</taxon>
        <taxon>Mammalia</taxon>
        <taxon>Eutheria</taxon>
        <taxon>Euarchontoglires</taxon>
        <taxon>Primates</taxon>
        <taxon>Strepsirrhini</taxon>
        <taxon>Lorisiformes</taxon>
        <taxon>Galagidae</taxon>
        <taxon>Galago</taxon>
    </lineage>
</organism>
<name>CYB_GALMA</name>
<comment type="function">
    <text evidence="2">Component of the ubiquinol-cytochrome c reductase complex (complex III or cytochrome b-c1 complex) that is part of the mitochondrial respiratory chain. The b-c1 complex mediates electron transfer from ubiquinol to cytochrome c. Contributes to the generation of a proton gradient across the mitochondrial membrane that is then used for ATP synthesis.</text>
</comment>
<comment type="cofactor">
    <cofactor evidence="2">
        <name>heme b</name>
        <dbReference type="ChEBI" id="CHEBI:60344"/>
    </cofactor>
    <text evidence="2">Binds 2 heme b groups non-covalently.</text>
</comment>
<comment type="subunit">
    <text evidence="2">The cytochrome bc1 complex contains 11 subunits: 3 respiratory subunits (MT-CYB, CYC1 and UQCRFS1), 2 core proteins (UQCRC1 and UQCRC2) and 6 low-molecular weight proteins (UQCRH/QCR6, UQCRB/QCR7, UQCRQ/QCR8, UQCR10/QCR9, UQCR11/QCR10 and a cleavage product of UQCRFS1). This cytochrome bc1 complex then forms a dimer.</text>
</comment>
<comment type="subcellular location">
    <subcellularLocation>
        <location evidence="2">Mitochondrion inner membrane</location>
        <topology evidence="2">Multi-pass membrane protein</topology>
    </subcellularLocation>
</comment>
<comment type="miscellaneous">
    <text evidence="1">Heme 1 (or BL or b562) is low-potential and absorbs at about 562 nm, and heme 2 (or BH or b566) is high-potential and absorbs at about 566 nm.</text>
</comment>
<comment type="similarity">
    <text evidence="3 4">Belongs to the cytochrome b family.</text>
</comment>
<comment type="caution">
    <text evidence="2">The full-length protein contains only eight transmembrane helices, not nine as predicted by bioinformatics tools.</text>
</comment>
<reference key="1">
    <citation type="journal article" date="2001" name="Syst. Biol.">
        <title>Failure of the ILD to determine data combinability for slow loris phylogeny.</title>
        <authorList>
            <person name="Yoder A.D."/>
            <person name="Irwin J.A."/>
            <person name="Payseur B.A."/>
        </authorList>
    </citation>
    <scope>NUCLEOTIDE SEQUENCE [GENOMIC DNA]</scope>
    <source>
        <strain>Isolate FMNH a 148985</strain>
    </source>
</reference>
<keyword id="KW-0249">Electron transport</keyword>
<keyword id="KW-0349">Heme</keyword>
<keyword id="KW-0408">Iron</keyword>
<keyword id="KW-0472">Membrane</keyword>
<keyword id="KW-0479">Metal-binding</keyword>
<keyword id="KW-0496">Mitochondrion</keyword>
<keyword id="KW-0999">Mitochondrion inner membrane</keyword>
<keyword id="KW-0679">Respiratory chain</keyword>
<keyword id="KW-0812">Transmembrane</keyword>
<keyword id="KW-1133">Transmembrane helix</keyword>
<keyword id="KW-0813">Transport</keyword>
<keyword id="KW-0830">Ubiquinone</keyword>
<feature type="chain" id="PRO_0000060989" description="Cytochrome b">
    <location>
        <begin position="1"/>
        <end position="379"/>
    </location>
</feature>
<feature type="transmembrane region" description="Helical" evidence="2">
    <location>
        <begin position="33"/>
        <end position="53"/>
    </location>
</feature>
<feature type="transmembrane region" description="Helical" evidence="2">
    <location>
        <begin position="77"/>
        <end position="98"/>
    </location>
</feature>
<feature type="transmembrane region" description="Helical" evidence="2">
    <location>
        <begin position="113"/>
        <end position="133"/>
    </location>
</feature>
<feature type="transmembrane region" description="Helical" evidence="2">
    <location>
        <begin position="178"/>
        <end position="198"/>
    </location>
</feature>
<feature type="transmembrane region" description="Helical" evidence="2">
    <location>
        <begin position="226"/>
        <end position="246"/>
    </location>
</feature>
<feature type="transmembrane region" description="Helical" evidence="2">
    <location>
        <begin position="288"/>
        <end position="308"/>
    </location>
</feature>
<feature type="transmembrane region" description="Helical" evidence="2">
    <location>
        <begin position="320"/>
        <end position="340"/>
    </location>
</feature>
<feature type="transmembrane region" description="Helical" evidence="2">
    <location>
        <begin position="347"/>
        <end position="367"/>
    </location>
</feature>
<feature type="binding site" description="axial binding residue" evidence="2">
    <location>
        <position position="83"/>
    </location>
    <ligand>
        <name>heme b</name>
        <dbReference type="ChEBI" id="CHEBI:60344"/>
        <label>b562</label>
    </ligand>
    <ligandPart>
        <name>Fe</name>
        <dbReference type="ChEBI" id="CHEBI:18248"/>
    </ligandPart>
</feature>
<feature type="binding site" description="axial binding residue" evidence="2">
    <location>
        <position position="97"/>
    </location>
    <ligand>
        <name>heme b</name>
        <dbReference type="ChEBI" id="CHEBI:60344"/>
        <label>b566</label>
    </ligand>
    <ligandPart>
        <name>Fe</name>
        <dbReference type="ChEBI" id="CHEBI:18248"/>
    </ligandPart>
</feature>
<feature type="binding site" description="axial binding residue" evidence="2">
    <location>
        <position position="182"/>
    </location>
    <ligand>
        <name>heme b</name>
        <dbReference type="ChEBI" id="CHEBI:60344"/>
        <label>b562</label>
    </ligand>
    <ligandPart>
        <name>Fe</name>
        <dbReference type="ChEBI" id="CHEBI:18248"/>
    </ligandPart>
</feature>
<feature type="binding site" description="axial binding residue" evidence="2">
    <location>
        <position position="196"/>
    </location>
    <ligand>
        <name>heme b</name>
        <dbReference type="ChEBI" id="CHEBI:60344"/>
        <label>b566</label>
    </ligand>
    <ligandPart>
        <name>Fe</name>
        <dbReference type="ChEBI" id="CHEBI:18248"/>
    </ligandPart>
</feature>
<feature type="binding site" evidence="2">
    <location>
        <position position="201"/>
    </location>
    <ligand>
        <name>a ubiquinone</name>
        <dbReference type="ChEBI" id="CHEBI:16389"/>
    </ligand>
</feature>
<proteinExistence type="inferred from homology"/>
<gene>
    <name type="primary">MT-CYB</name>
    <name type="synonym">COB</name>
    <name type="synonym">CYTB</name>
    <name type="synonym">MTCYB</name>
</gene>
<protein>
    <recommendedName>
        <fullName>Cytochrome b</fullName>
    </recommendedName>
    <alternativeName>
        <fullName>Complex III subunit 3</fullName>
    </alternativeName>
    <alternativeName>
        <fullName>Complex III subunit III</fullName>
    </alternativeName>
    <alternativeName>
        <fullName>Cytochrome b-c1 complex subunit 3</fullName>
    </alternativeName>
    <alternativeName>
        <fullName>Ubiquinol-cytochrome-c reductase complex cytochrome b subunit</fullName>
    </alternativeName>
</protein>
<accession>Q9G9J7</accession>
<geneLocation type="mitochondrion"/>
<dbReference type="EMBL" id="AF271409">
    <property type="protein sequence ID" value="AAG17349.1"/>
    <property type="molecule type" value="Genomic_DNA"/>
</dbReference>
<dbReference type="SMR" id="Q9G9J7"/>
<dbReference type="GO" id="GO:0005743">
    <property type="term" value="C:mitochondrial inner membrane"/>
    <property type="evidence" value="ECO:0007669"/>
    <property type="project" value="UniProtKB-SubCell"/>
</dbReference>
<dbReference type="GO" id="GO:0045275">
    <property type="term" value="C:respiratory chain complex III"/>
    <property type="evidence" value="ECO:0007669"/>
    <property type="project" value="InterPro"/>
</dbReference>
<dbReference type="GO" id="GO:0046872">
    <property type="term" value="F:metal ion binding"/>
    <property type="evidence" value="ECO:0007669"/>
    <property type="project" value="UniProtKB-KW"/>
</dbReference>
<dbReference type="GO" id="GO:0008121">
    <property type="term" value="F:ubiquinol-cytochrome-c reductase activity"/>
    <property type="evidence" value="ECO:0007669"/>
    <property type="project" value="InterPro"/>
</dbReference>
<dbReference type="GO" id="GO:0006122">
    <property type="term" value="P:mitochondrial electron transport, ubiquinol to cytochrome c"/>
    <property type="evidence" value="ECO:0007669"/>
    <property type="project" value="TreeGrafter"/>
</dbReference>
<dbReference type="CDD" id="cd00290">
    <property type="entry name" value="cytochrome_b_C"/>
    <property type="match status" value="1"/>
</dbReference>
<dbReference type="CDD" id="cd00284">
    <property type="entry name" value="Cytochrome_b_N"/>
    <property type="match status" value="1"/>
</dbReference>
<dbReference type="FunFam" id="1.20.810.10:FF:000002">
    <property type="entry name" value="Cytochrome b"/>
    <property type="match status" value="1"/>
</dbReference>
<dbReference type="Gene3D" id="1.20.810.10">
    <property type="entry name" value="Cytochrome Bc1 Complex, Chain C"/>
    <property type="match status" value="1"/>
</dbReference>
<dbReference type="InterPro" id="IPR005798">
    <property type="entry name" value="Cyt_b/b6_C"/>
</dbReference>
<dbReference type="InterPro" id="IPR036150">
    <property type="entry name" value="Cyt_b/b6_C_sf"/>
</dbReference>
<dbReference type="InterPro" id="IPR005797">
    <property type="entry name" value="Cyt_b/b6_N"/>
</dbReference>
<dbReference type="InterPro" id="IPR027387">
    <property type="entry name" value="Cytb/b6-like_sf"/>
</dbReference>
<dbReference type="InterPro" id="IPR030689">
    <property type="entry name" value="Cytochrome_b"/>
</dbReference>
<dbReference type="InterPro" id="IPR048260">
    <property type="entry name" value="Cytochrome_b_C_euk/bac"/>
</dbReference>
<dbReference type="InterPro" id="IPR048259">
    <property type="entry name" value="Cytochrome_b_N_euk/bac"/>
</dbReference>
<dbReference type="InterPro" id="IPR016174">
    <property type="entry name" value="Di-haem_cyt_TM"/>
</dbReference>
<dbReference type="PANTHER" id="PTHR19271">
    <property type="entry name" value="CYTOCHROME B"/>
    <property type="match status" value="1"/>
</dbReference>
<dbReference type="PANTHER" id="PTHR19271:SF16">
    <property type="entry name" value="CYTOCHROME B"/>
    <property type="match status" value="1"/>
</dbReference>
<dbReference type="Pfam" id="PF00032">
    <property type="entry name" value="Cytochrom_B_C"/>
    <property type="match status" value="1"/>
</dbReference>
<dbReference type="Pfam" id="PF00033">
    <property type="entry name" value="Cytochrome_B"/>
    <property type="match status" value="1"/>
</dbReference>
<dbReference type="PIRSF" id="PIRSF038885">
    <property type="entry name" value="COB"/>
    <property type="match status" value="1"/>
</dbReference>
<dbReference type="SUPFAM" id="SSF81648">
    <property type="entry name" value="a domain/subunit of cytochrome bc1 complex (Ubiquinol-cytochrome c reductase)"/>
    <property type="match status" value="1"/>
</dbReference>
<dbReference type="SUPFAM" id="SSF81342">
    <property type="entry name" value="Transmembrane di-heme cytochromes"/>
    <property type="match status" value="1"/>
</dbReference>
<dbReference type="PROSITE" id="PS51003">
    <property type="entry name" value="CYTB_CTER"/>
    <property type="match status" value="1"/>
</dbReference>
<dbReference type="PROSITE" id="PS51002">
    <property type="entry name" value="CYTB_NTER"/>
    <property type="match status" value="1"/>
</dbReference>
<sequence>MTNIRKQHPLAKMINHSFIDLPAPSNISSWWNFGSLLGLCLMIQIITGLFLAMHYTSDTSTAFSSVTHICRDVNYGWTIRYLHANGASMFFICLFMHIGRGLYYGSFTFLETWNIGVILLFTVMATAFMGYVLPWGQMSFWGATVITNLLSAIPYMGTGLVEWIWGGFSVDKATLTRFFAFHFILPFIIAALAMIHLLFLHETGSNNPSGISSDSDKIPFHPYYTIKDLLGVIFLLLCLFSLVLFSPDLLGDPDNFTPANPLNTPPHIKPEWYFLFAYAILRSIPNKLGGVLALVFSILILTLIPFLHTAKQRSMMFRPLSQCLYWMLVADLLTLTWIGGQPVENPFIAIGQTASIIYFLIILILMPLTNLLENKLLKW</sequence>
<evidence type="ECO:0000250" key="1"/>
<evidence type="ECO:0000250" key="2">
    <source>
        <dbReference type="UniProtKB" id="P00157"/>
    </source>
</evidence>
<evidence type="ECO:0000255" key="3">
    <source>
        <dbReference type="PROSITE-ProRule" id="PRU00967"/>
    </source>
</evidence>
<evidence type="ECO:0000255" key="4">
    <source>
        <dbReference type="PROSITE-ProRule" id="PRU00968"/>
    </source>
</evidence>